<dbReference type="EMBL" id="M62809">
    <property type="protein sequence ID" value="AAA25012.1"/>
    <property type="molecule type" value="Genomic_DNA"/>
</dbReference>
<dbReference type="EMBL" id="L42023">
    <property type="protein sequence ID" value="AAC22094.1"/>
    <property type="molecule type" value="Genomic_DNA"/>
</dbReference>
<dbReference type="EMBL" id="M59751">
    <property type="protein sequence ID" value="AAA24947.1"/>
    <property type="molecule type" value="Genomic_DNA"/>
</dbReference>
<dbReference type="PIR" id="H64067">
    <property type="entry name" value="H64067"/>
</dbReference>
<dbReference type="RefSeq" id="NP_438596.1">
    <property type="nucleotide sequence ID" value="NC_000907.1"/>
</dbReference>
<dbReference type="SMR" id="P31772"/>
<dbReference type="STRING" id="71421.HI_0435"/>
<dbReference type="TCDB" id="1.B.22.4.1">
    <property type="family name" value="the outer bacterial membrane secretin (secretin) family"/>
</dbReference>
<dbReference type="EnsemblBacteria" id="AAC22094">
    <property type="protein sequence ID" value="AAC22094"/>
    <property type="gene ID" value="HI_0435"/>
</dbReference>
<dbReference type="KEGG" id="hin:HI_0435"/>
<dbReference type="PATRIC" id="fig|71421.8.peg.455"/>
<dbReference type="eggNOG" id="COG4796">
    <property type="taxonomic scope" value="Bacteria"/>
</dbReference>
<dbReference type="HOGENOM" id="CLU_006756_2_1_6"/>
<dbReference type="OrthoDB" id="9775455at2"/>
<dbReference type="PhylomeDB" id="P31772"/>
<dbReference type="BioCyc" id="HINF71421:G1GJ1-450-MONOMER"/>
<dbReference type="Proteomes" id="UP000000579">
    <property type="component" value="Chromosome"/>
</dbReference>
<dbReference type="GO" id="GO:0009279">
    <property type="term" value="C:cell outer membrane"/>
    <property type="evidence" value="ECO:0007669"/>
    <property type="project" value="UniProtKB-SubCell"/>
</dbReference>
<dbReference type="GO" id="GO:0030420">
    <property type="term" value="P:establishment of competence for transformation"/>
    <property type="evidence" value="ECO:0007669"/>
    <property type="project" value="UniProtKB-KW"/>
</dbReference>
<dbReference type="GO" id="GO:0009306">
    <property type="term" value="P:protein secretion"/>
    <property type="evidence" value="ECO:0007669"/>
    <property type="project" value="InterPro"/>
</dbReference>
<dbReference type="Gene3D" id="3.30.1370.120">
    <property type="match status" value="1"/>
</dbReference>
<dbReference type="Gene3D" id="3.30.1370.130">
    <property type="match status" value="1"/>
</dbReference>
<dbReference type="InterPro" id="IPR001775">
    <property type="entry name" value="GspD/PilQ"/>
</dbReference>
<dbReference type="InterPro" id="IPR005644">
    <property type="entry name" value="NolW-like"/>
</dbReference>
<dbReference type="InterPro" id="IPR038591">
    <property type="entry name" value="NolW-like_sf"/>
</dbReference>
<dbReference type="InterPro" id="IPR013355">
    <property type="entry name" value="Pilus_4_PilQ"/>
</dbReference>
<dbReference type="InterPro" id="IPR004846">
    <property type="entry name" value="T2SS/T3SS_dom"/>
</dbReference>
<dbReference type="InterPro" id="IPR004845">
    <property type="entry name" value="T2SS_GspD_CS"/>
</dbReference>
<dbReference type="InterPro" id="IPR051808">
    <property type="entry name" value="Type_IV_pilus_biogenesis"/>
</dbReference>
<dbReference type="NCBIfam" id="TIGR02515">
    <property type="entry name" value="IV_pilus_PilQ"/>
    <property type="match status" value="1"/>
</dbReference>
<dbReference type="PANTHER" id="PTHR30604:SF1">
    <property type="entry name" value="DNA UTILIZATION PROTEIN HOFQ"/>
    <property type="match status" value="1"/>
</dbReference>
<dbReference type="PANTHER" id="PTHR30604">
    <property type="entry name" value="PROTEIN TRANSPORT PROTEIN HOFQ"/>
    <property type="match status" value="1"/>
</dbReference>
<dbReference type="Pfam" id="PF00263">
    <property type="entry name" value="Secretin"/>
    <property type="match status" value="1"/>
</dbReference>
<dbReference type="Pfam" id="PF03958">
    <property type="entry name" value="Secretin_N"/>
    <property type="match status" value="1"/>
</dbReference>
<dbReference type="PRINTS" id="PR00811">
    <property type="entry name" value="BCTERIALGSPD"/>
</dbReference>
<dbReference type="PRINTS" id="PR01032">
    <property type="entry name" value="PHAGEIV"/>
</dbReference>
<dbReference type="PROSITE" id="PS00875">
    <property type="entry name" value="T2SP_D"/>
    <property type="match status" value="1"/>
</dbReference>
<comment type="function">
    <text>Involved in transformation (genetic competence for DNA uptake).</text>
</comment>
<comment type="subcellular location">
    <subcellularLocation>
        <location evidence="2">Cell outer membrane</location>
    </subcellularLocation>
</comment>
<comment type="similarity">
    <text evidence="2">Belongs to the bacterial secretin family. PilQ subfamily.</text>
</comment>
<sequence length="445" mass="49208">MKKYFLKCGYFLVCFCLPLIVFANPKTDNERFFIRLSQAPLAQTLEQLAFQQDVNLVIGDILENKISLKLNNIDMPRLLQIIAKSKHLTLNKDDGIYYLNGSQSGKGQVAGNLTTNEPHLVSHTVKLHFAKASELMKSLTTGSGSLLSPAGSITFDDRSNLLVIQDEPRSVQNIKKLIAEMDKPIEQIAIEARIVTITDESLKELGVRWGIFNPTENARRVAGSLTGNSFENIADNLNVNFATTTTPAGSIALQVAKINGRLLDLELSALERENNVEIIASPRLLTTNKKSASIKQGTEIPYIVSNTRNDTQSVEFREAVLGLEVTPHISKDNNILLDLLVSQNSPGSRVAYGQNEVVSIDKQEINTQVFAKDGETIVLGGVFHDTITKSEDKVPLLGDIPVIKRLFSKESERHQKRELVIFVTPHILKAGETLEALKQKSEGKK</sequence>
<protein>
    <recommendedName>
        <fullName>Competence protein E</fullName>
    </recommendedName>
    <alternativeName>
        <fullName>DNA transformation protein ComE</fullName>
    </alternativeName>
</protein>
<reference key="1">
    <citation type="journal article" date="1991" name="Gene">
        <title>Nucleotide sequence of a cluster of genes involved in the transformation of Haemophilus influenzae Rd.</title>
        <authorList>
            <person name="Tomb J.-F."/>
            <person name="El-Hajj H."/>
            <person name="Smith H.O."/>
        </authorList>
    </citation>
    <scope>NUCLEOTIDE SEQUENCE [GENOMIC DNA]</scope>
    <source>
        <strain>ATCC 51907 / DSM 11121 / KW20 / Rd</strain>
    </source>
</reference>
<reference key="2">
    <citation type="journal article" date="1995" name="Science">
        <title>Whole-genome random sequencing and assembly of Haemophilus influenzae Rd.</title>
        <authorList>
            <person name="Fleischmann R.D."/>
            <person name="Adams M.D."/>
            <person name="White O."/>
            <person name="Clayton R.A."/>
            <person name="Kirkness E.F."/>
            <person name="Kerlavage A.R."/>
            <person name="Bult C.J."/>
            <person name="Tomb J.-F."/>
            <person name="Dougherty B.A."/>
            <person name="Merrick J.M."/>
            <person name="McKenney K."/>
            <person name="Sutton G.G."/>
            <person name="FitzHugh W."/>
            <person name="Fields C.A."/>
            <person name="Gocayne J.D."/>
            <person name="Scott J.D."/>
            <person name="Shirley R."/>
            <person name="Liu L.-I."/>
            <person name="Glodek A."/>
            <person name="Kelley J.M."/>
            <person name="Weidman J.F."/>
            <person name="Phillips C.A."/>
            <person name="Spriggs T."/>
            <person name="Hedblom E."/>
            <person name="Cotton M.D."/>
            <person name="Utterback T.R."/>
            <person name="Hanna M.C."/>
            <person name="Nguyen D.T."/>
            <person name="Saudek D.M."/>
            <person name="Brandon R.C."/>
            <person name="Fine L.D."/>
            <person name="Fritchman J.L."/>
            <person name="Fuhrmann J.L."/>
            <person name="Geoghagen N.S.M."/>
            <person name="Gnehm C.L."/>
            <person name="McDonald L.A."/>
            <person name="Small K.V."/>
            <person name="Fraser C.M."/>
            <person name="Smith H.O."/>
            <person name="Venter J.C."/>
        </authorList>
    </citation>
    <scope>NUCLEOTIDE SEQUENCE [LARGE SCALE GENOMIC DNA]</scope>
    <source>
        <strain>ATCC 51907 / DSM 11121 / KW20 / Rd</strain>
    </source>
</reference>
<reference key="3">
    <citation type="journal article" date="1991" name="J. Bacteriol.">
        <title>Sequence and transcriptional regulation of com101A, a locus required for genetic transformation in Haemophilus influenzae.</title>
        <authorList>
            <person name="Larson T.G."/>
            <person name="Goodgal S.H."/>
        </authorList>
    </citation>
    <scope>NUCLEOTIDE SEQUENCE [GENOMIC DNA] OF 75-445</scope>
</reference>
<feature type="signal peptide" evidence="1">
    <location>
        <begin position="1"/>
        <end position="23"/>
    </location>
</feature>
<feature type="chain" id="PRO_0000013121" description="Competence protein E">
    <location>
        <begin position="24"/>
        <end position="445"/>
    </location>
</feature>
<feature type="sequence conflict" description="In Ref. 1; AAA25012." evidence="2" ref="1">
    <original>TLEALKQKSEG</original>
    <variation>NVRGVET</variation>
    <location>
        <begin position="433"/>
        <end position="443"/>
    </location>
</feature>
<evidence type="ECO:0000255" key="1"/>
<evidence type="ECO:0000305" key="2"/>
<name>COME_HAEIN</name>
<organism>
    <name type="scientific">Haemophilus influenzae (strain ATCC 51907 / DSM 11121 / KW20 / Rd)</name>
    <dbReference type="NCBI Taxonomy" id="71421"/>
    <lineage>
        <taxon>Bacteria</taxon>
        <taxon>Pseudomonadati</taxon>
        <taxon>Pseudomonadota</taxon>
        <taxon>Gammaproteobacteria</taxon>
        <taxon>Pasteurellales</taxon>
        <taxon>Pasteurellaceae</taxon>
        <taxon>Haemophilus</taxon>
    </lineage>
</organism>
<proteinExistence type="inferred from homology"/>
<keyword id="KW-0998">Cell outer membrane</keyword>
<keyword id="KW-0178">Competence</keyword>
<keyword id="KW-0472">Membrane</keyword>
<keyword id="KW-1185">Reference proteome</keyword>
<keyword id="KW-0732">Signal</keyword>
<keyword id="KW-0813">Transport</keyword>
<gene>
    <name type="primary">comE</name>
    <name type="ordered locus">HI_0435</name>
</gene>
<accession>P31772</accession>